<accession>P79785</accession>
<reference key="1">
    <citation type="journal article" date="1996" name="FEBS Lett.">
        <title>Molecular cloning, expression and tissue distribution of a chicken angiotensin II receptor.</title>
        <authorList>
            <person name="Kempf H."/>
            <person name="le Moullec J.-M."/>
            <person name="Corvol P."/>
            <person name="Gasc J.-M."/>
        </authorList>
    </citation>
    <scope>NUCLEOTIDE SEQUENCE [MRNA]</scope>
</reference>
<protein>
    <recommendedName>
        <fullName>Type-1 angiotensin II receptor</fullName>
    </recommendedName>
    <alternativeName>
        <fullName>Angiotensin II type-1 receptor</fullName>
        <shortName>AT1 receptor</shortName>
    </alternativeName>
</protein>
<name>AGTR1_CHICK</name>
<gene>
    <name type="primary">AGTR1</name>
</gene>
<sequence length="359" mass="41220">MVPNYSTEETVKRIHVDCPVSGRHSYIYIMVPTVYSIIFIIGIFGNSLVVIVIYCYMKLKTVASIFLLNLALADLCFLITLPLWAAYTAMEYQWPFGNCLCKLASAGISFNLYASVFLLTCLSIDRYLAIVHPVKSRIRRTMFVARVTCIVIWLLAGVASLPVIIHRNIFFAENLNMTVCGFRYDNNNTTLRVGLGLSKNLLGFLIPFLIILTSYTLIWKTLKKAYQIQRNKTRNDDIFKMIVAIVFFFFFSWIPHQVFTFLDVLIQLHVITDCKITDIVDTAMPFTICIAYFNNCLNPFFYVFFGKNFKKYFLQLIKYIPPNVSTHPSLTTKMSSLSYRPPENIRLPTKKTAGSFDAE</sequence>
<organism>
    <name type="scientific">Gallus gallus</name>
    <name type="common">Chicken</name>
    <dbReference type="NCBI Taxonomy" id="9031"/>
    <lineage>
        <taxon>Eukaryota</taxon>
        <taxon>Metazoa</taxon>
        <taxon>Chordata</taxon>
        <taxon>Craniata</taxon>
        <taxon>Vertebrata</taxon>
        <taxon>Euteleostomi</taxon>
        <taxon>Archelosauria</taxon>
        <taxon>Archosauria</taxon>
        <taxon>Dinosauria</taxon>
        <taxon>Saurischia</taxon>
        <taxon>Theropoda</taxon>
        <taxon>Coelurosauria</taxon>
        <taxon>Aves</taxon>
        <taxon>Neognathae</taxon>
        <taxon>Galloanserae</taxon>
        <taxon>Galliformes</taxon>
        <taxon>Phasianidae</taxon>
        <taxon>Phasianinae</taxon>
        <taxon>Gallus</taxon>
    </lineage>
</organism>
<proteinExistence type="evidence at transcript level"/>
<evidence type="ECO:0000250" key="1">
    <source>
        <dbReference type="UniProtKB" id="P30556"/>
    </source>
</evidence>
<evidence type="ECO:0000255" key="2"/>
<evidence type="ECO:0000255" key="3">
    <source>
        <dbReference type="PROSITE-ProRule" id="PRU00521"/>
    </source>
</evidence>
<keyword id="KW-1003">Cell membrane</keyword>
<keyword id="KW-1015">Disulfide bond</keyword>
<keyword id="KW-0297">G-protein coupled receptor</keyword>
<keyword id="KW-0325">Glycoprotein</keyword>
<keyword id="KW-0472">Membrane</keyword>
<keyword id="KW-0675">Receptor</keyword>
<keyword id="KW-1185">Reference proteome</keyword>
<keyword id="KW-0807">Transducer</keyword>
<keyword id="KW-0812">Transmembrane</keyword>
<keyword id="KW-1133">Transmembrane helix</keyword>
<feature type="chain" id="PRO_0000069163" description="Type-1 angiotensin II receptor">
    <location>
        <begin position="1"/>
        <end position="359"/>
    </location>
</feature>
<feature type="topological domain" description="Extracellular" evidence="1">
    <location>
        <begin position="1"/>
        <end position="25"/>
    </location>
</feature>
<feature type="transmembrane region" description="Helical; Name=1" evidence="1">
    <location>
        <begin position="26"/>
        <end position="55"/>
    </location>
</feature>
<feature type="topological domain" description="Cytoplasmic" evidence="1">
    <location>
        <begin position="56"/>
        <end position="61"/>
    </location>
</feature>
<feature type="transmembrane region" description="Helical; Name=2" evidence="1">
    <location>
        <begin position="62"/>
        <end position="89"/>
    </location>
</feature>
<feature type="topological domain" description="Extracellular" evidence="1">
    <location>
        <begin position="90"/>
        <end position="98"/>
    </location>
</feature>
<feature type="transmembrane region" description="Helical; Name=3" evidence="1">
    <location>
        <begin position="99"/>
        <end position="125"/>
    </location>
</feature>
<feature type="topological domain" description="Cytoplasmic" evidence="1">
    <location>
        <begin position="126"/>
        <end position="141"/>
    </location>
</feature>
<feature type="transmembrane region" description="Helical; Name=4" evidence="1">
    <location>
        <begin position="142"/>
        <end position="165"/>
    </location>
</feature>
<feature type="topological domain" description="Extracellular" evidence="1">
    <location>
        <begin position="166"/>
        <end position="190"/>
    </location>
</feature>
<feature type="transmembrane region" description="Helical; Name=5" evidence="1">
    <location>
        <begin position="191"/>
        <end position="216"/>
    </location>
</feature>
<feature type="topological domain" description="Cytoplasmic" evidence="1">
    <location>
        <begin position="217"/>
        <end position="239"/>
    </location>
</feature>
<feature type="transmembrane region" description="Helical; Name=6" evidence="1">
    <location>
        <begin position="240"/>
        <end position="268"/>
    </location>
</feature>
<feature type="topological domain" description="Extracellular" evidence="1">
    <location>
        <begin position="269"/>
        <end position="278"/>
    </location>
</feature>
<feature type="transmembrane region" description="Helical; Name=7" evidence="1">
    <location>
        <begin position="279"/>
        <end position="304"/>
    </location>
</feature>
<feature type="topological domain" description="Cytoplasmic" evidence="1">
    <location>
        <begin position="305"/>
        <end position="359"/>
    </location>
</feature>
<feature type="binding site" evidence="1">
    <location>
        <position position="17"/>
    </location>
    <ligand>
        <name>angiotensin II</name>
        <dbReference type="ChEBI" id="CHEBI:58506"/>
    </ligand>
</feature>
<feature type="binding site" evidence="1">
    <location>
        <position position="167"/>
    </location>
    <ligand>
        <name>angiotensin II</name>
        <dbReference type="ChEBI" id="CHEBI:58506"/>
    </ligand>
</feature>
<feature type="binding site" evidence="1">
    <location>
        <position position="182"/>
    </location>
    <ligand>
        <name>angiotensin II</name>
        <dbReference type="ChEBI" id="CHEBI:58506"/>
    </ligand>
</feature>
<feature type="binding site" evidence="1">
    <location>
        <position position="184"/>
    </location>
    <ligand>
        <name>angiotensin II</name>
        <dbReference type="ChEBI" id="CHEBI:58506"/>
    </ligand>
</feature>
<feature type="binding site" evidence="1">
    <location>
        <position position="199"/>
    </location>
    <ligand>
        <name>angiotensin II</name>
        <dbReference type="ChEBI" id="CHEBI:58506"/>
    </ligand>
</feature>
<feature type="glycosylation site" description="N-linked (GlcNAc...) asparagine" evidence="2">
    <location>
        <position position="4"/>
    </location>
</feature>
<feature type="glycosylation site" description="N-linked (GlcNAc...) asparagine" evidence="2">
    <location>
        <position position="176"/>
    </location>
</feature>
<feature type="glycosylation site" description="N-linked (GlcNAc...) asparagine" evidence="2">
    <location>
        <position position="187"/>
    </location>
</feature>
<feature type="glycosylation site" description="N-linked (GlcNAc...) asparagine" evidence="2">
    <location>
        <position position="188"/>
    </location>
</feature>
<feature type="disulfide bond" evidence="1">
    <location>
        <begin position="18"/>
        <end position="274"/>
    </location>
</feature>
<feature type="disulfide bond" evidence="3">
    <location>
        <begin position="101"/>
        <end position="180"/>
    </location>
</feature>
<comment type="function">
    <text evidence="1">Receptor for angiotensin II, a vasoconstricting peptide, which acts as a key regulator of blood pressure and sodium retention by the kidney. The activated receptor in turn couples to G-alpha proteins G(q) (GNAQ, GNA11, GNA14 or GNA15) and thus activates phospholipase C and increases the cytosolic Ca(2+) concentrations, which in turn triggers cellular responses such as stimulation of protein kinase C.</text>
</comment>
<comment type="subcellular location">
    <subcellularLocation>
        <location evidence="1">Cell membrane</location>
        <topology evidence="1">Multi-pass membrane protein</topology>
    </subcellularLocation>
</comment>
<comment type="PTM">
    <text evidence="1">C-terminal Ser or Thr residues may be phosphorylated.</text>
</comment>
<comment type="similarity">
    <text evidence="3">Belongs to the G-protein coupled receptor 1 family.</text>
</comment>
<dbReference type="EMBL" id="U76704">
    <property type="protein sequence ID" value="AAB41201.1"/>
    <property type="molecule type" value="mRNA"/>
</dbReference>
<dbReference type="RefSeq" id="NP_990488.1">
    <property type="nucleotide sequence ID" value="NM_205157.4"/>
</dbReference>
<dbReference type="RefSeq" id="XP_015146861.1">
    <property type="nucleotide sequence ID" value="XM_015291375.4"/>
</dbReference>
<dbReference type="RefSeq" id="XP_015146862.1">
    <property type="nucleotide sequence ID" value="XM_015291376.4"/>
</dbReference>
<dbReference type="RefSeq" id="XP_015146863.1">
    <property type="nucleotide sequence ID" value="XM_015291377.4"/>
</dbReference>
<dbReference type="RefSeq" id="XP_015146864.1">
    <property type="nucleotide sequence ID" value="XM_015291378.1"/>
</dbReference>
<dbReference type="RefSeq" id="XP_015146865.1">
    <property type="nucleotide sequence ID" value="XM_015291379.4"/>
</dbReference>
<dbReference type="RefSeq" id="XP_015146866.1">
    <property type="nucleotide sequence ID" value="XM_015291380.1"/>
</dbReference>
<dbReference type="RefSeq" id="XP_015146867.1">
    <property type="nucleotide sequence ID" value="XM_015291381.1"/>
</dbReference>
<dbReference type="RefSeq" id="XP_025009084.1">
    <property type="nucleotide sequence ID" value="XM_025153316.3"/>
</dbReference>
<dbReference type="RefSeq" id="XP_040561409.1">
    <property type="nucleotide sequence ID" value="XM_040705475.2"/>
</dbReference>
<dbReference type="RefSeq" id="XP_040561410.1">
    <property type="nucleotide sequence ID" value="XM_040705476.2"/>
</dbReference>
<dbReference type="RefSeq" id="XP_040561411.1">
    <property type="nucleotide sequence ID" value="XM_040705477.2"/>
</dbReference>
<dbReference type="RefSeq" id="XP_046779570.1">
    <property type="nucleotide sequence ID" value="XM_046923614.1"/>
</dbReference>
<dbReference type="RefSeq" id="XP_046779571.1">
    <property type="nucleotide sequence ID" value="XM_046923615.1"/>
</dbReference>
<dbReference type="RefSeq" id="XP_046779572.1">
    <property type="nucleotide sequence ID" value="XM_046923616.1"/>
</dbReference>
<dbReference type="RefSeq" id="XP_046779573.1">
    <property type="nucleotide sequence ID" value="XM_046923617.1"/>
</dbReference>
<dbReference type="RefSeq" id="XP_046779574.1">
    <property type="nucleotide sequence ID" value="XM_046923618.1"/>
</dbReference>
<dbReference type="RefSeq" id="XP_046779575.1">
    <property type="nucleotide sequence ID" value="XM_046923619.1"/>
</dbReference>
<dbReference type="RefSeq" id="XP_046779577.1">
    <property type="nucleotide sequence ID" value="XM_046923621.1"/>
</dbReference>
<dbReference type="SMR" id="P79785"/>
<dbReference type="FunCoup" id="P79785">
    <property type="interactions" value="195"/>
</dbReference>
<dbReference type="STRING" id="9031.ENSGALP00000057556"/>
<dbReference type="GlyCosmos" id="P79785">
    <property type="glycosylation" value="4 sites, No reported glycans"/>
</dbReference>
<dbReference type="GlyGen" id="P79785">
    <property type="glycosylation" value="4 sites"/>
</dbReference>
<dbReference type="PaxDb" id="9031-ENSGALP00000039673"/>
<dbReference type="Ensembl" id="ENSGALT00000109211">
    <property type="protein sequence ID" value="ENSGALP00000074997"/>
    <property type="gene ID" value="ENSGALG00000056916"/>
</dbReference>
<dbReference type="Ensembl" id="ENSGALT00000115549">
    <property type="protein sequence ID" value="ENSGALP00000094733"/>
    <property type="gene ID" value="ENSGALG00000056916"/>
</dbReference>
<dbReference type="Ensembl" id="ENSGALT00000134114">
    <property type="protein sequence ID" value="ENSGALP00000088024"/>
    <property type="gene ID" value="ENSGALG00000056916"/>
</dbReference>
<dbReference type="Ensembl" id="ENSGALT00000138498">
    <property type="protein sequence ID" value="ENSGALP00000087158"/>
    <property type="gene ID" value="ENSGALG00000056916"/>
</dbReference>
<dbReference type="Ensembl" id="ENSGALT00000140024">
    <property type="protein sequence ID" value="ENSGALP00000093577"/>
    <property type="gene ID" value="ENSGALG00000056916"/>
</dbReference>
<dbReference type="Ensembl" id="ENSGALT00000141392">
    <property type="protein sequence ID" value="ENSGALP00000077896"/>
    <property type="gene ID" value="ENSGALG00000056916"/>
</dbReference>
<dbReference type="Ensembl" id="ENSGALT00000150519">
    <property type="protein sequence ID" value="ENSGALP00000077468"/>
    <property type="gene ID" value="ENSGALG00000056916"/>
</dbReference>
<dbReference type="Ensembl" id="ENSGALT00010041183.1">
    <property type="protein sequence ID" value="ENSGALP00010024104.1"/>
    <property type="gene ID" value="ENSGALG00010017056.1"/>
</dbReference>
<dbReference type="Ensembl" id="ENSGALT00010041191.1">
    <property type="protein sequence ID" value="ENSGALP00010024110.1"/>
    <property type="gene ID" value="ENSGALG00010017056.1"/>
</dbReference>
<dbReference type="Ensembl" id="ENSGALT00010041192.1">
    <property type="protein sequence ID" value="ENSGALP00010024111.1"/>
    <property type="gene ID" value="ENSGALG00010017056.1"/>
</dbReference>
<dbReference type="Ensembl" id="ENSGALT00010041195.1">
    <property type="protein sequence ID" value="ENSGALP00010024113.1"/>
    <property type="gene ID" value="ENSGALG00010017056.1"/>
</dbReference>
<dbReference type="GeneID" id="396065"/>
<dbReference type="KEGG" id="gga:396065"/>
<dbReference type="CTD" id="185"/>
<dbReference type="VEuPathDB" id="HostDB:geneid_396065"/>
<dbReference type="eggNOG" id="KOG3656">
    <property type="taxonomic scope" value="Eukaryota"/>
</dbReference>
<dbReference type="GeneTree" id="ENSGT01130000278303"/>
<dbReference type="HOGENOM" id="CLU_009579_8_3_1"/>
<dbReference type="InParanoid" id="P79785"/>
<dbReference type="OMA" id="QVFHFMQ"/>
<dbReference type="OrthoDB" id="8804420at2759"/>
<dbReference type="PhylomeDB" id="P79785"/>
<dbReference type="TreeFam" id="TF330024"/>
<dbReference type="Reactome" id="R-GGA-375276">
    <property type="pathway name" value="Peptide ligand-binding receptors"/>
</dbReference>
<dbReference type="Reactome" id="R-GGA-416476">
    <property type="pathway name" value="G alpha (q) signalling events"/>
</dbReference>
<dbReference type="PRO" id="PR:P79785"/>
<dbReference type="Proteomes" id="UP000000539">
    <property type="component" value="Chromosome 9"/>
</dbReference>
<dbReference type="Bgee" id="ENSGALG00000038512">
    <property type="expression patterns" value="Expressed in muscle tissue and 8 other cell types or tissues"/>
</dbReference>
<dbReference type="GO" id="GO:0005886">
    <property type="term" value="C:plasma membrane"/>
    <property type="evidence" value="ECO:0000318"/>
    <property type="project" value="GO_Central"/>
</dbReference>
<dbReference type="GO" id="GO:0001596">
    <property type="term" value="F:angiotensin type I receptor activity"/>
    <property type="evidence" value="ECO:0000250"/>
    <property type="project" value="UniProtKB"/>
</dbReference>
<dbReference type="GO" id="GO:0004945">
    <property type="term" value="F:angiotensin type II receptor activity"/>
    <property type="evidence" value="ECO:0007669"/>
    <property type="project" value="Ensembl"/>
</dbReference>
<dbReference type="GO" id="GO:0031711">
    <property type="term" value="F:bradykinin receptor binding"/>
    <property type="evidence" value="ECO:0007669"/>
    <property type="project" value="Ensembl"/>
</dbReference>
<dbReference type="GO" id="GO:0046982">
    <property type="term" value="F:protein heterodimerization activity"/>
    <property type="evidence" value="ECO:0007669"/>
    <property type="project" value="Ensembl"/>
</dbReference>
<dbReference type="GO" id="GO:0019722">
    <property type="term" value="P:calcium-mediated signaling"/>
    <property type="evidence" value="ECO:0007669"/>
    <property type="project" value="Ensembl"/>
</dbReference>
<dbReference type="GO" id="GO:0060326">
    <property type="term" value="P:cell chemotaxis"/>
    <property type="evidence" value="ECO:0007669"/>
    <property type="project" value="Ensembl"/>
</dbReference>
<dbReference type="GO" id="GO:0007186">
    <property type="term" value="P:G protein-coupled receptor signaling pathway"/>
    <property type="evidence" value="ECO:0000318"/>
    <property type="project" value="GO_Central"/>
</dbReference>
<dbReference type="GO" id="GO:0006954">
    <property type="term" value="P:inflammatory response"/>
    <property type="evidence" value="ECO:0000318"/>
    <property type="project" value="GO_Central"/>
</dbReference>
<dbReference type="GO" id="GO:0001822">
    <property type="term" value="P:kidney development"/>
    <property type="evidence" value="ECO:0007669"/>
    <property type="project" value="Ensembl"/>
</dbReference>
<dbReference type="GO" id="GO:0002034">
    <property type="term" value="P:maintenance of blood vessel diameter homeostasis by renin-angiotensin"/>
    <property type="evidence" value="ECO:0000250"/>
    <property type="project" value="UniProtKB"/>
</dbReference>
<dbReference type="GO" id="GO:1903589">
    <property type="term" value="P:positive regulation of blood vessel endothelial cell proliferation involved in sprouting angiogenesis"/>
    <property type="evidence" value="ECO:0007669"/>
    <property type="project" value="Ensembl"/>
</dbReference>
<dbReference type="GO" id="GO:0007204">
    <property type="term" value="P:positive regulation of cytosolic calcium ion concentration"/>
    <property type="evidence" value="ECO:0000318"/>
    <property type="project" value="GO_Central"/>
</dbReference>
<dbReference type="GO" id="GO:0010744">
    <property type="term" value="P:positive regulation of macrophage derived foam cell differentiation"/>
    <property type="evidence" value="ECO:0007669"/>
    <property type="project" value="Ensembl"/>
</dbReference>
<dbReference type="GO" id="GO:0051247">
    <property type="term" value="P:positive regulation of protein metabolic process"/>
    <property type="evidence" value="ECO:0007669"/>
    <property type="project" value="Ensembl"/>
</dbReference>
<dbReference type="GO" id="GO:0019229">
    <property type="term" value="P:regulation of vasoconstriction"/>
    <property type="evidence" value="ECO:0007669"/>
    <property type="project" value="Ensembl"/>
</dbReference>
<dbReference type="GO" id="GO:0007266">
    <property type="term" value="P:Rho protein signal transduction"/>
    <property type="evidence" value="ECO:0007669"/>
    <property type="project" value="Ensembl"/>
</dbReference>
<dbReference type="GO" id="GO:0046718">
    <property type="term" value="P:symbiont entry into host cell"/>
    <property type="evidence" value="ECO:0007669"/>
    <property type="project" value="Ensembl"/>
</dbReference>
<dbReference type="CDD" id="cd15192">
    <property type="entry name" value="7tmA_AT1R"/>
    <property type="match status" value="1"/>
</dbReference>
<dbReference type="FunFam" id="1.20.1070.10:FF:000088">
    <property type="entry name" value="Angiotensin II receptor type 1"/>
    <property type="match status" value="1"/>
</dbReference>
<dbReference type="Gene3D" id="1.20.1070.10">
    <property type="entry name" value="Rhodopsin 7-helix transmembrane proteins"/>
    <property type="match status" value="1"/>
</dbReference>
<dbReference type="InterPro" id="IPR000190">
    <property type="entry name" value="ATII_AT1_rcpt"/>
</dbReference>
<dbReference type="InterPro" id="IPR000248">
    <property type="entry name" value="ATII_rcpt"/>
</dbReference>
<dbReference type="InterPro" id="IPR050119">
    <property type="entry name" value="CCR1-9-like"/>
</dbReference>
<dbReference type="InterPro" id="IPR000276">
    <property type="entry name" value="GPCR_Rhodpsn"/>
</dbReference>
<dbReference type="InterPro" id="IPR017452">
    <property type="entry name" value="GPCR_Rhodpsn_7TM"/>
</dbReference>
<dbReference type="PANTHER" id="PTHR10489">
    <property type="entry name" value="CELL ADHESION MOLECULE"/>
    <property type="match status" value="1"/>
</dbReference>
<dbReference type="PANTHER" id="PTHR10489:SF956">
    <property type="entry name" value="TYPE-1 ANGIOTENSIN II RECEPTOR A"/>
    <property type="match status" value="1"/>
</dbReference>
<dbReference type="Pfam" id="PF00001">
    <property type="entry name" value="7tm_1"/>
    <property type="match status" value="1"/>
</dbReference>
<dbReference type="PRINTS" id="PR00241">
    <property type="entry name" value="ANGIOTENSINR"/>
</dbReference>
<dbReference type="PRINTS" id="PR00635">
    <property type="entry name" value="ANGIOTENSN1R"/>
</dbReference>
<dbReference type="PRINTS" id="PR00237">
    <property type="entry name" value="GPCRRHODOPSN"/>
</dbReference>
<dbReference type="SMART" id="SM01381">
    <property type="entry name" value="7TM_GPCR_Srsx"/>
    <property type="match status" value="1"/>
</dbReference>
<dbReference type="SUPFAM" id="SSF81321">
    <property type="entry name" value="Family A G protein-coupled receptor-like"/>
    <property type="match status" value="1"/>
</dbReference>
<dbReference type="PROSITE" id="PS00237">
    <property type="entry name" value="G_PROTEIN_RECEP_F1_1"/>
    <property type="match status" value="1"/>
</dbReference>
<dbReference type="PROSITE" id="PS50262">
    <property type="entry name" value="G_PROTEIN_RECEP_F1_2"/>
    <property type="match status" value="1"/>
</dbReference>